<protein>
    <recommendedName>
        <fullName evidence="1">3-isopropylmalate dehydrogenase</fullName>
        <ecNumber evidence="1">1.1.1.85</ecNumber>
    </recommendedName>
    <alternativeName>
        <fullName evidence="1">3-IPM-DH</fullName>
    </alternativeName>
    <alternativeName>
        <fullName evidence="1">Beta-IPM dehydrogenase</fullName>
        <shortName evidence="1">IMDH</shortName>
    </alternativeName>
</protein>
<evidence type="ECO:0000255" key="1">
    <source>
        <dbReference type="HAMAP-Rule" id="MF_01033"/>
    </source>
</evidence>
<sequence length="360" mass="38754">MSKQILILPGDGIGPEIMTEAVKVLELANQKYQLGFELTHDVIGGAAIDKHGVPLADETLDRARAADAVLLGAVGGPKWDTIERDIRPERGLLKIRSQLGLFGNLRPAILYPQLADASSLKPEIVAGLDILIVRELTGGIYFGAPRGTRVLDNGERQAYDTLPYSESEIRRIAKVGFDMAMVRGKKLCSVDKANVLASSQLWREIVEQVAKDYPEVELSHLYVDNAAMQLVRAPKQFDVIVTDNLFGDILSDQASMLTGSIGMLPSASLDTANKGMYEPCHGSAPDIAGQGIANPLATILSVSMMLRYSFNLTAAADAIEQAVSLVLDQGIRTGDIWSEGKVKVGTKEMGDAVVAALRNL</sequence>
<proteinExistence type="inferred from homology"/>
<comment type="function">
    <text evidence="1">Catalyzes the oxidation of 3-carboxy-2-hydroxy-4-methylpentanoate (3-isopropylmalate) to 3-carboxy-4-methyl-2-oxopentanoate. The product decarboxylates to 4-methyl-2 oxopentanoate.</text>
</comment>
<comment type="catalytic activity">
    <reaction evidence="1">
        <text>(2R,3S)-3-isopropylmalate + NAD(+) = 4-methyl-2-oxopentanoate + CO2 + NADH</text>
        <dbReference type="Rhea" id="RHEA:32271"/>
        <dbReference type="ChEBI" id="CHEBI:16526"/>
        <dbReference type="ChEBI" id="CHEBI:17865"/>
        <dbReference type="ChEBI" id="CHEBI:35121"/>
        <dbReference type="ChEBI" id="CHEBI:57540"/>
        <dbReference type="ChEBI" id="CHEBI:57945"/>
        <dbReference type="EC" id="1.1.1.85"/>
    </reaction>
</comment>
<comment type="cofactor">
    <cofactor evidence="1">
        <name>Mg(2+)</name>
        <dbReference type="ChEBI" id="CHEBI:18420"/>
    </cofactor>
    <cofactor evidence="1">
        <name>Mn(2+)</name>
        <dbReference type="ChEBI" id="CHEBI:29035"/>
    </cofactor>
    <text evidence="1">Binds 1 Mg(2+) or Mn(2+) ion per subunit.</text>
</comment>
<comment type="pathway">
    <text evidence="1">Amino-acid biosynthesis; L-leucine biosynthesis; L-leucine from 3-methyl-2-oxobutanoate: step 3/4.</text>
</comment>
<comment type="subunit">
    <text evidence="1">Homodimer.</text>
</comment>
<comment type="subcellular location">
    <subcellularLocation>
        <location evidence="1">Cytoplasm</location>
    </subcellularLocation>
</comment>
<comment type="similarity">
    <text evidence="1">Belongs to the isocitrate and isopropylmalate dehydrogenases family. LeuB type 1 subfamily.</text>
</comment>
<accession>Q884C0</accession>
<organism>
    <name type="scientific">Pseudomonas syringae pv. tomato (strain ATCC BAA-871 / DC3000)</name>
    <dbReference type="NCBI Taxonomy" id="223283"/>
    <lineage>
        <taxon>Bacteria</taxon>
        <taxon>Pseudomonadati</taxon>
        <taxon>Pseudomonadota</taxon>
        <taxon>Gammaproteobacteria</taxon>
        <taxon>Pseudomonadales</taxon>
        <taxon>Pseudomonadaceae</taxon>
        <taxon>Pseudomonas</taxon>
    </lineage>
</organism>
<dbReference type="EC" id="1.1.1.85" evidence="1"/>
<dbReference type="EMBL" id="AE016853">
    <property type="protein sequence ID" value="AAO55692.1"/>
    <property type="molecule type" value="Genomic_DNA"/>
</dbReference>
<dbReference type="RefSeq" id="NP_791997.1">
    <property type="nucleotide sequence ID" value="NC_004578.1"/>
</dbReference>
<dbReference type="RefSeq" id="WP_005769662.1">
    <property type="nucleotide sequence ID" value="NC_004578.1"/>
</dbReference>
<dbReference type="SMR" id="Q884C0"/>
<dbReference type="STRING" id="223283.PSPTO_2175"/>
<dbReference type="GeneID" id="1183826"/>
<dbReference type="KEGG" id="pst:PSPTO_2175"/>
<dbReference type="PATRIC" id="fig|223283.9.peg.2206"/>
<dbReference type="eggNOG" id="COG0473">
    <property type="taxonomic scope" value="Bacteria"/>
</dbReference>
<dbReference type="HOGENOM" id="CLU_031953_0_3_6"/>
<dbReference type="OrthoDB" id="9767905at2"/>
<dbReference type="PhylomeDB" id="Q884C0"/>
<dbReference type="UniPathway" id="UPA00048">
    <property type="reaction ID" value="UER00072"/>
</dbReference>
<dbReference type="Proteomes" id="UP000002515">
    <property type="component" value="Chromosome"/>
</dbReference>
<dbReference type="GO" id="GO:0005829">
    <property type="term" value="C:cytosol"/>
    <property type="evidence" value="ECO:0007669"/>
    <property type="project" value="TreeGrafter"/>
</dbReference>
<dbReference type="GO" id="GO:0003862">
    <property type="term" value="F:3-isopropylmalate dehydrogenase activity"/>
    <property type="evidence" value="ECO:0007669"/>
    <property type="project" value="UniProtKB-UniRule"/>
</dbReference>
<dbReference type="GO" id="GO:0000287">
    <property type="term" value="F:magnesium ion binding"/>
    <property type="evidence" value="ECO:0007669"/>
    <property type="project" value="InterPro"/>
</dbReference>
<dbReference type="GO" id="GO:0051287">
    <property type="term" value="F:NAD binding"/>
    <property type="evidence" value="ECO:0007669"/>
    <property type="project" value="InterPro"/>
</dbReference>
<dbReference type="GO" id="GO:0009098">
    <property type="term" value="P:L-leucine biosynthetic process"/>
    <property type="evidence" value="ECO:0007669"/>
    <property type="project" value="UniProtKB-UniRule"/>
</dbReference>
<dbReference type="FunFam" id="3.40.718.10:FF:000004">
    <property type="entry name" value="3-isopropylmalate dehydrogenase"/>
    <property type="match status" value="1"/>
</dbReference>
<dbReference type="Gene3D" id="3.40.718.10">
    <property type="entry name" value="Isopropylmalate Dehydrogenase"/>
    <property type="match status" value="1"/>
</dbReference>
<dbReference type="HAMAP" id="MF_01033">
    <property type="entry name" value="LeuB_type1"/>
    <property type="match status" value="1"/>
</dbReference>
<dbReference type="InterPro" id="IPR019818">
    <property type="entry name" value="IsoCit/isopropylmalate_DH_CS"/>
</dbReference>
<dbReference type="InterPro" id="IPR024084">
    <property type="entry name" value="IsoPropMal-DH-like_dom"/>
</dbReference>
<dbReference type="InterPro" id="IPR004429">
    <property type="entry name" value="Isopropylmalate_DH"/>
</dbReference>
<dbReference type="NCBIfam" id="TIGR00169">
    <property type="entry name" value="leuB"/>
    <property type="match status" value="1"/>
</dbReference>
<dbReference type="PANTHER" id="PTHR42979">
    <property type="entry name" value="3-ISOPROPYLMALATE DEHYDROGENASE"/>
    <property type="match status" value="1"/>
</dbReference>
<dbReference type="PANTHER" id="PTHR42979:SF1">
    <property type="entry name" value="3-ISOPROPYLMALATE DEHYDROGENASE"/>
    <property type="match status" value="1"/>
</dbReference>
<dbReference type="Pfam" id="PF00180">
    <property type="entry name" value="Iso_dh"/>
    <property type="match status" value="1"/>
</dbReference>
<dbReference type="SMART" id="SM01329">
    <property type="entry name" value="Iso_dh"/>
    <property type="match status" value="1"/>
</dbReference>
<dbReference type="SUPFAM" id="SSF53659">
    <property type="entry name" value="Isocitrate/Isopropylmalate dehydrogenase-like"/>
    <property type="match status" value="1"/>
</dbReference>
<dbReference type="PROSITE" id="PS00470">
    <property type="entry name" value="IDH_IMDH"/>
    <property type="match status" value="1"/>
</dbReference>
<gene>
    <name evidence="1" type="primary">leuB</name>
    <name type="ordered locus">PSPTO_2175</name>
</gene>
<name>LEU3_PSESM</name>
<reference key="1">
    <citation type="journal article" date="2003" name="Proc. Natl. Acad. Sci. U.S.A.">
        <title>The complete genome sequence of the Arabidopsis and tomato pathogen Pseudomonas syringae pv. tomato DC3000.</title>
        <authorList>
            <person name="Buell C.R."/>
            <person name="Joardar V."/>
            <person name="Lindeberg M."/>
            <person name="Selengut J."/>
            <person name="Paulsen I.T."/>
            <person name="Gwinn M.L."/>
            <person name="Dodson R.J."/>
            <person name="DeBoy R.T."/>
            <person name="Durkin A.S."/>
            <person name="Kolonay J.F."/>
            <person name="Madupu R."/>
            <person name="Daugherty S.C."/>
            <person name="Brinkac L.M."/>
            <person name="Beanan M.J."/>
            <person name="Haft D.H."/>
            <person name="Nelson W.C."/>
            <person name="Davidsen T.M."/>
            <person name="Zafar N."/>
            <person name="Zhou L."/>
            <person name="Liu J."/>
            <person name="Yuan Q."/>
            <person name="Khouri H.M."/>
            <person name="Fedorova N.B."/>
            <person name="Tran B."/>
            <person name="Russell D."/>
            <person name="Berry K.J."/>
            <person name="Utterback T.R."/>
            <person name="Van Aken S.E."/>
            <person name="Feldblyum T.V."/>
            <person name="D'Ascenzo M."/>
            <person name="Deng W.-L."/>
            <person name="Ramos A.R."/>
            <person name="Alfano J.R."/>
            <person name="Cartinhour S."/>
            <person name="Chatterjee A.K."/>
            <person name="Delaney T.P."/>
            <person name="Lazarowitz S.G."/>
            <person name="Martin G.B."/>
            <person name="Schneider D.J."/>
            <person name="Tang X."/>
            <person name="Bender C.L."/>
            <person name="White O."/>
            <person name="Fraser C.M."/>
            <person name="Collmer A."/>
        </authorList>
    </citation>
    <scope>NUCLEOTIDE SEQUENCE [LARGE SCALE GENOMIC DNA]</scope>
    <source>
        <strain>ATCC BAA-871 / DC3000</strain>
    </source>
</reference>
<feature type="chain" id="PRO_0000083732" description="3-isopropylmalate dehydrogenase">
    <location>
        <begin position="1"/>
        <end position="360"/>
    </location>
</feature>
<feature type="binding site" evidence="1">
    <location>
        <begin position="76"/>
        <end position="89"/>
    </location>
    <ligand>
        <name>NAD(+)</name>
        <dbReference type="ChEBI" id="CHEBI:57540"/>
    </ligand>
</feature>
<feature type="binding site" evidence="1">
    <location>
        <position position="96"/>
    </location>
    <ligand>
        <name>substrate</name>
    </ligand>
</feature>
<feature type="binding site" evidence="1">
    <location>
        <position position="106"/>
    </location>
    <ligand>
        <name>substrate</name>
    </ligand>
</feature>
<feature type="binding site" evidence="1">
    <location>
        <position position="134"/>
    </location>
    <ligand>
        <name>substrate</name>
    </ligand>
</feature>
<feature type="binding site" evidence="1">
    <location>
        <position position="224"/>
    </location>
    <ligand>
        <name>Mg(2+)</name>
        <dbReference type="ChEBI" id="CHEBI:18420"/>
    </ligand>
</feature>
<feature type="binding site" evidence="1">
    <location>
        <position position="224"/>
    </location>
    <ligand>
        <name>substrate</name>
    </ligand>
</feature>
<feature type="binding site" evidence="1">
    <location>
        <position position="248"/>
    </location>
    <ligand>
        <name>Mg(2+)</name>
        <dbReference type="ChEBI" id="CHEBI:18420"/>
    </ligand>
</feature>
<feature type="binding site" evidence="1">
    <location>
        <position position="252"/>
    </location>
    <ligand>
        <name>Mg(2+)</name>
        <dbReference type="ChEBI" id="CHEBI:18420"/>
    </ligand>
</feature>
<feature type="binding site" evidence="1">
    <location>
        <begin position="282"/>
        <end position="294"/>
    </location>
    <ligand>
        <name>NAD(+)</name>
        <dbReference type="ChEBI" id="CHEBI:57540"/>
    </ligand>
</feature>
<feature type="site" description="Important for catalysis" evidence="1">
    <location>
        <position position="141"/>
    </location>
</feature>
<feature type="site" description="Important for catalysis" evidence="1">
    <location>
        <position position="192"/>
    </location>
</feature>
<keyword id="KW-0028">Amino-acid biosynthesis</keyword>
<keyword id="KW-0100">Branched-chain amino acid biosynthesis</keyword>
<keyword id="KW-0963">Cytoplasm</keyword>
<keyword id="KW-0432">Leucine biosynthesis</keyword>
<keyword id="KW-0460">Magnesium</keyword>
<keyword id="KW-0464">Manganese</keyword>
<keyword id="KW-0479">Metal-binding</keyword>
<keyword id="KW-0520">NAD</keyword>
<keyword id="KW-0560">Oxidoreductase</keyword>
<keyword id="KW-1185">Reference proteome</keyword>